<name>RL32_ACTP7</name>
<keyword id="KW-0687">Ribonucleoprotein</keyword>
<keyword id="KW-0689">Ribosomal protein</keyword>
<dbReference type="EMBL" id="CP001091">
    <property type="protein sequence ID" value="ACE62089.1"/>
    <property type="molecule type" value="Genomic_DNA"/>
</dbReference>
<dbReference type="RefSeq" id="WP_005617866.1">
    <property type="nucleotide sequence ID" value="NC_010939.1"/>
</dbReference>
<dbReference type="SMR" id="B3GYG5"/>
<dbReference type="KEGG" id="apa:APP7_1437"/>
<dbReference type="HOGENOM" id="CLU_129084_2_1_6"/>
<dbReference type="Proteomes" id="UP000001226">
    <property type="component" value="Chromosome"/>
</dbReference>
<dbReference type="GO" id="GO:0015934">
    <property type="term" value="C:large ribosomal subunit"/>
    <property type="evidence" value="ECO:0007669"/>
    <property type="project" value="InterPro"/>
</dbReference>
<dbReference type="GO" id="GO:0003735">
    <property type="term" value="F:structural constituent of ribosome"/>
    <property type="evidence" value="ECO:0007669"/>
    <property type="project" value="InterPro"/>
</dbReference>
<dbReference type="GO" id="GO:0006412">
    <property type="term" value="P:translation"/>
    <property type="evidence" value="ECO:0007669"/>
    <property type="project" value="UniProtKB-UniRule"/>
</dbReference>
<dbReference type="Gene3D" id="1.20.5.640">
    <property type="entry name" value="Single helix bin"/>
    <property type="match status" value="1"/>
</dbReference>
<dbReference type="HAMAP" id="MF_00340">
    <property type="entry name" value="Ribosomal_bL32"/>
    <property type="match status" value="1"/>
</dbReference>
<dbReference type="InterPro" id="IPR002677">
    <property type="entry name" value="Ribosomal_bL32"/>
</dbReference>
<dbReference type="InterPro" id="IPR044957">
    <property type="entry name" value="Ribosomal_bL32_bact"/>
</dbReference>
<dbReference type="InterPro" id="IPR011332">
    <property type="entry name" value="Ribosomal_zn-bd"/>
</dbReference>
<dbReference type="NCBIfam" id="TIGR01031">
    <property type="entry name" value="rpmF_bact"/>
    <property type="match status" value="1"/>
</dbReference>
<dbReference type="PANTHER" id="PTHR35534">
    <property type="entry name" value="50S RIBOSOMAL PROTEIN L32"/>
    <property type="match status" value="1"/>
</dbReference>
<dbReference type="PANTHER" id="PTHR35534:SF1">
    <property type="entry name" value="LARGE RIBOSOMAL SUBUNIT PROTEIN BL32"/>
    <property type="match status" value="1"/>
</dbReference>
<dbReference type="Pfam" id="PF01783">
    <property type="entry name" value="Ribosomal_L32p"/>
    <property type="match status" value="1"/>
</dbReference>
<dbReference type="SUPFAM" id="SSF57829">
    <property type="entry name" value="Zn-binding ribosomal proteins"/>
    <property type="match status" value="1"/>
</dbReference>
<evidence type="ECO:0000255" key="1">
    <source>
        <dbReference type="HAMAP-Rule" id="MF_00340"/>
    </source>
</evidence>
<evidence type="ECO:0000256" key="2">
    <source>
        <dbReference type="SAM" id="MobiDB-lite"/>
    </source>
</evidence>
<evidence type="ECO:0000305" key="3"/>
<feature type="chain" id="PRO_1000120078" description="Large ribosomal subunit protein bL32">
    <location>
        <begin position="1"/>
        <end position="56"/>
    </location>
</feature>
<feature type="region of interest" description="Disordered" evidence="2">
    <location>
        <begin position="1"/>
        <end position="27"/>
    </location>
</feature>
<feature type="compositionally biased region" description="Basic residues" evidence="2">
    <location>
        <begin position="7"/>
        <end position="16"/>
    </location>
</feature>
<organism>
    <name type="scientific">Actinobacillus pleuropneumoniae serotype 7 (strain AP76)</name>
    <dbReference type="NCBI Taxonomy" id="537457"/>
    <lineage>
        <taxon>Bacteria</taxon>
        <taxon>Pseudomonadati</taxon>
        <taxon>Pseudomonadota</taxon>
        <taxon>Gammaproteobacteria</taxon>
        <taxon>Pasteurellales</taxon>
        <taxon>Pasteurellaceae</taxon>
        <taxon>Actinobacillus</taxon>
    </lineage>
</organism>
<comment type="similarity">
    <text evidence="1">Belongs to the bacterial ribosomal protein bL32 family.</text>
</comment>
<sequence length="56" mass="6383">MAVQQNKKSRSRRDMRRSHDALTTAAVSVDKTTGETHLRHHVTADGYYCGRKVINK</sequence>
<accession>B3GYG5</accession>
<reference key="1">
    <citation type="submission" date="2008-06" db="EMBL/GenBank/DDBJ databases">
        <title>Genome and proteome analysis of A. pleuropneumoniae serotype 7.</title>
        <authorList>
            <person name="Linke B."/>
            <person name="Buettner F."/>
            <person name="Martinez-Arias R."/>
            <person name="Goesmann A."/>
            <person name="Baltes N."/>
            <person name="Tegetmeyer H."/>
            <person name="Singh M."/>
            <person name="Gerlach G.F."/>
        </authorList>
    </citation>
    <scope>NUCLEOTIDE SEQUENCE [LARGE SCALE GENOMIC DNA]</scope>
    <source>
        <strain>AP76</strain>
    </source>
</reference>
<proteinExistence type="inferred from homology"/>
<gene>
    <name evidence="1" type="primary">rpmF</name>
    <name type="ordered locus">APP7_1437</name>
</gene>
<protein>
    <recommendedName>
        <fullName evidence="1">Large ribosomal subunit protein bL32</fullName>
    </recommendedName>
    <alternativeName>
        <fullName evidence="3">50S ribosomal protein L32</fullName>
    </alternativeName>
</protein>